<keyword id="KW-0007">Acetylation</keyword>
<keyword id="KW-0072">Autophagy</keyword>
<keyword id="KW-0175">Coiled coil</keyword>
<keyword id="KW-0968">Cytoplasmic vesicle</keyword>
<keyword id="KW-0225">Disease variant</keyword>
<keyword id="KW-1023">Dystonia</keyword>
<keyword id="KW-0967">Endosome</keyword>
<keyword id="KW-1026">Leukodystrophy</keyword>
<keyword id="KW-0458">Lysosome</keyword>
<keyword id="KW-0472">Membrane</keyword>
<keyword id="KW-0479">Metal-binding</keyword>
<keyword id="KW-0488">Methylation</keyword>
<keyword id="KW-0547">Nucleotide-binding</keyword>
<keyword id="KW-0597">Phosphoprotein</keyword>
<keyword id="KW-0653">Protein transport</keyword>
<keyword id="KW-1267">Proteomics identification</keyword>
<keyword id="KW-1185">Reference proteome</keyword>
<keyword id="KW-0677">Repeat</keyword>
<keyword id="KW-0813">Transport</keyword>
<keyword id="KW-0862">Zinc</keyword>
<keyword id="KW-0863">Zinc-finger</keyword>
<comment type="function">
    <text evidence="8 10 14 19 20 21 22 23">Plays a role in vesicle-mediated protein trafficking to lysosomal compartments including the endocytic membrane transport and autophagic pathways. Believed to act as a core component of the putative HOPS and CORVET endosomal tethering complexes which are proposed to be involved in the Rab5-to-Rab7 endosome conversion probably implicating MON1A/B, and via binding SNAREs and SNARE complexes to mediate tethering and docking events during SNARE-mediated membrane fusion. The HOPS complex is proposed to be recruited to Rab7 on the late endosomal membrane and to regulate late endocytic, phagocytic and autophagic traffic towards lysosomes. The CORVET complex is proposed to function as a Rab5 effector to mediate early endosome fusion probably in specific endosome subpopulations (PubMed:11382755, PubMed:23351085, PubMed:24554770, PubMed:25266290, PubMed:25783203). Required for fusion of endosomes and autophagosomes with lysosomes (PubMed:25783203). Involved in cargo transport from early to late endosomes and required for the transition from early to late endosomes (PubMed:21148287). Involved in the retrograde Shiga toxin transport (PubMed:23593995).</text>
</comment>
<comment type="subunit">
    <text evidence="1 4 6 7 11 12 13 14 16 19 20 22">Core component of at least two putative endosomal tethering complexes, the homotypic fusion and vacuole protein sorting (HOPS) complex and the class C core vacuole/endosome tethering (CORVET) complex. Their common core is composed of the class C Vps proteins VPS11, VPS16, VPS18 and VPS33A, which in HOPS further associates with VPS39 and VPS41 and in CORVET with VPS8 and TGFBRAP1 (PubMed:11382755, PubMed:20434987, PubMed:23351085, PubMed:23901104, PubMed:25266290, PubMed:25783203). Interacts with TGFBRAP1, MON1B, STX7, STX17, EZR, RDX, MSN, ECPAS (PubMed:11382755, PubMed:20682791, PubMed:21148287, PubMed:24554770, PubMed:25266290). Interacts with RAB5C (By similarity). Associates with adaptor protein complex 3 (AP-3) and clathrin:AP-3 complexes (By similarity). Interacts with PLEKHM1 (PubMed:28325809).</text>
</comment>
<comment type="interaction">
    <interactant intactId="EBI-373380">
        <id>Q9H270</id>
    </interactant>
    <interactant intactId="EBI-77613">
        <id>P05067</id>
        <label>APP</label>
    </interactant>
    <organismsDiffer>false</organismsDiffer>
    <experiments>3</experiments>
</comment>
<comment type="interaction">
    <interactant intactId="EBI-373380">
        <id>Q9H270</id>
    </interactant>
    <interactant intactId="EBI-2341576">
        <id>P35226</id>
        <label>BMI1</label>
    </interactant>
    <organismsDiffer>false</organismsDiffer>
    <experiments>2</experiments>
</comment>
<comment type="interaction">
    <interactant intactId="EBI-373380">
        <id>Q9H270</id>
    </interactant>
    <interactant intactId="EBI-25837549">
        <id>P28329-3</id>
        <label>CHAT</label>
    </interactant>
    <organismsDiffer>false</organismsDiffer>
    <experiments>3</experiments>
</comment>
<comment type="interaction">
    <interactant intactId="EBI-373380">
        <id>Q9H270</id>
    </interactant>
    <interactant intactId="EBI-12593112">
        <id>O75190-2</id>
        <label>DNAJB6</label>
    </interactant>
    <organismsDiffer>false</organismsDiffer>
    <experiments>3</experiments>
</comment>
<comment type="interaction">
    <interactant intactId="EBI-373380">
        <id>Q9H270</id>
    </interactant>
    <interactant intactId="EBI-348399">
        <id>P22607</id>
        <label>FGFR3</label>
    </interactant>
    <organismsDiffer>false</organismsDiffer>
    <experiments>3</experiments>
</comment>
<comment type="interaction">
    <interactant intactId="EBI-373380">
        <id>Q9H270</id>
    </interactant>
    <interactant intactId="EBI-351506">
        <id>P06396</id>
        <label>GSN</label>
    </interactant>
    <organismsDiffer>false</organismsDiffer>
    <experiments>3</experiments>
</comment>
<comment type="interaction">
    <interactant intactId="EBI-373380">
        <id>Q9H270</id>
    </interactant>
    <interactant intactId="EBI-350145">
        <id>P01112</id>
        <label>HRAS</label>
    </interactant>
    <organismsDiffer>false</organismsDiffer>
    <experiments>3</experiments>
</comment>
<comment type="interaction">
    <interactant intactId="EBI-373380">
        <id>Q9H270</id>
    </interactant>
    <interactant intactId="EBI-948266">
        <id>O14901</id>
        <label>KLF11</label>
    </interactant>
    <organismsDiffer>false</organismsDiffer>
    <experiments>3</experiments>
</comment>
<comment type="interaction">
    <interactant intactId="EBI-373380">
        <id>Q9H270</id>
    </interactant>
    <interactant intactId="EBI-10171774">
        <id>P60410</id>
        <label>KRTAP10-8</label>
    </interactant>
    <organismsDiffer>false</organismsDiffer>
    <experiments>6</experiments>
</comment>
<comment type="interaction">
    <interactant intactId="EBI-373380">
        <id>Q9H270</id>
    </interactant>
    <interactant intactId="EBI-716404">
        <id>P16284</id>
        <label>PECAM1</label>
    </interactant>
    <organismsDiffer>false</organismsDiffer>
    <experiments>3</experiments>
</comment>
<comment type="interaction">
    <interactant intactId="EBI-373380">
        <id>Q9H270</id>
    </interactant>
    <interactant intactId="EBI-5235340">
        <id>Q7Z699</id>
        <label>SPRED1</label>
    </interactant>
    <organismsDiffer>false</organismsDiffer>
    <experiments>3</experiments>
</comment>
<comment type="interaction">
    <interactant intactId="EBI-373380">
        <id>Q9H270</id>
    </interactant>
    <interactant intactId="EBI-3221827">
        <id>O15400</id>
        <label>STX7</label>
    </interactant>
    <organismsDiffer>false</organismsDiffer>
    <experiments>2</experiments>
</comment>
<comment type="interaction">
    <interactant intactId="EBI-373380">
        <id>Q9H270</id>
    </interactant>
    <interactant intactId="EBI-2954829">
        <id>Q8WUH2</id>
        <label>TGFBRAP1</label>
    </interactant>
    <organismsDiffer>false</organismsDiffer>
    <experiments>6</experiments>
</comment>
<comment type="interaction">
    <interactant intactId="EBI-373380">
        <id>Q9H270</id>
    </interactant>
    <interactant intactId="EBI-473850">
        <id>P61086</id>
        <label>UBE2K</label>
    </interactant>
    <organismsDiffer>false</organismsDiffer>
    <experiments>3</experiments>
</comment>
<comment type="interaction">
    <interactant intactId="EBI-373380">
        <id>Q9H270</id>
    </interactant>
    <interactant intactId="EBI-353844">
        <id>P08670</id>
        <label>VIM</label>
    </interactant>
    <organismsDiffer>false</organismsDiffer>
    <experiments>3</experiments>
</comment>
<comment type="interaction">
    <interactant intactId="EBI-373380">
        <id>Q9H270</id>
    </interactant>
    <interactant intactId="EBI-2655929">
        <id>Q9H269</id>
        <label>VPS16</label>
    </interactant>
    <organismsDiffer>false</organismsDiffer>
    <experiments>8</experiments>
</comment>
<comment type="interaction">
    <interactant intactId="EBI-373380">
        <id>Q9H270</id>
    </interactant>
    <interactant intactId="EBI-1053363">
        <id>Q9P253</id>
        <label>VPS18</label>
    </interactant>
    <organismsDiffer>false</organismsDiffer>
    <experiments>11</experiments>
</comment>
<comment type="interaction">
    <interactant intactId="EBI-373380">
        <id>Q9H270</id>
    </interactant>
    <interactant intactId="EBI-2527283">
        <id>Q96AX1</id>
        <label>VPS33A</label>
    </interactant>
    <organismsDiffer>false</organismsDiffer>
    <experiments>4</experiments>
</comment>
<comment type="interaction">
    <interactant intactId="EBI-373380">
        <id>Q9H270</id>
    </interactant>
    <interactant intactId="EBI-1050197">
        <id>Q96JC1</id>
        <label>VPS39</label>
    </interactant>
    <organismsDiffer>false</organismsDiffer>
    <experiments>5</experiments>
</comment>
<comment type="interaction">
    <interactant intactId="EBI-373380">
        <id>Q9H270</id>
    </interactant>
    <interactant intactId="EBI-11962886">
        <id>Q96JC1-2</id>
        <label>VPS39</label>
    </interactant>
    <organismsDiffer>false</organismsDiffer>
    <experiments>4</experiments>
</comment>
<comment type="interaction">
    <interactant intactId="EBI-373380">
        <id>Q9H270</id>
    </interactant>
    <interactant intactId="EBI-2130459">
        <id>P49754</id>
        <label>VPS41</label>
    </interactant>
    <organismsDiffer>false</organismsDiffer>
    <experiments>5</experiments>
</comment>
<comment type="interaction">
    <interactant intactId="EBI-373380">
        <id>Q9H270</id>
    </interactant>
    <interactant intactId="EBI-25900580">
        <id>Q9Y649</id>
    </interactant>
    <organismsDiffer>false</organismsDiffer>
    <experiments>3</experiments>
</comment>
<comment type="interaction">
    <interactant intactId="EBI-373380">
        <id>Q9H270</id>
    </interactant>
    <interactant intactId="EBI-918669">
        <id>Q63615</id>
        <label>Vps33a</label>
    </interactant>
    <organismsDiffer>true</organismsDiffer>
    <experiments>4</experiments>
</comment>
<comment type="subcellular location">
    <subcellularLocation>
        <location evidence="7">Endosome</location>
    </subcellularLocation>
    <subcellularLocation>
        <location evidence="4 8">Late endosome membrane</location>
        <topology evidence="4">Peripheral membrane protein</topology>
        <orientation evidence="18">Cytoplasmic side</orientation>
    </subcellularLocation>
    <subcellularLocation>
        <location evidence="4 5 9">Lysosome membrane</location>
        <topology evidence="4">Peripheral membrane protein</topology>
        <orientation evidence="18">Cytoplasmic side</orientation>
    </subcellularLocation>
    <subcellularLocation>
        <location evidence="8 18">Early endosome</location>
    </subcellularLocation>
    <subcellularLocation>
        <location evidence="18">Cytoplasmic vesicle</location>
    </subcellularLocation>
    <subcellularLocation>
        <location evidence="18">Cytoplasmic vesicle</location>
        <location evidence="18">Autophagosome</location>
    </subcellularLocation>
    <subcellularLocation>
        <location evidence="18">Cytoplasmic vesicle</location>
        <location evidence="18">Clathrin-coated vesicle</location>
    </subcellularLocation>
</comment>
<comment type="tissue specificity">
    <text>Ubiquitous. Expression was highest in heart and low in lung.</text>
</comment>
<comment type="disease" evidence="15">
    <disease id="DI-04619">
        <name>Leukodystrophy, hypomyelinating, 12</name>
        <acronym>HLD12</acronym>
        <description>An autosomal recessive neurologic disorder characterized by developmental delay, spasticity, truncal hypotonia, acquired microcephaly, intellectual disability with variable seizure disorder, accompanied by thin corpus callosum, paucity of white matter and delayed myelination.</description>
        <dbReference type="MIM" id="616683"/>
    </disease>
    <text>The disease is caused by variants affecting the gene represented in this entry.</text>
</comment>
<comment type="disease" evidence="17">
    <disease id="DI-06279">
        <name>Dystonia 32</name>
        <acronym>DYT32</acronym>
        <description>A form of dystonia, a disorder defined by the presence of sustained involuntary muscle contraction, often leading to abnormal postures. DYT32 is an autosomal recessive, slowly progressive form with onset in adulthood and generalized involvement of the limbs, trunk, neck, and larynx, resulting in dysarthria and dysphagia. Brain imaging may show abnormalities in the basal ganglia.</description>
        <dbReference type="MIM" id="619637"/>
    </disease>
    <text>The disease may be caused by variants affecting the gene represented in this entry.</text>
</comment>
<comment type="similarity">
    <text evidence="18">Belongs to the VPS11 family.</text>
</comment>
<comment type="sequence caution" evidence="18">
    <conflict type="frameshift">
        <sequence resource="EMBL-CDS" id="AAG23761"/>
    </conflict>
</comment>
<comment type="sequence caution" evidence="18">
    <conflict type="erroneous initiation">
        <sequence resource="EMBL-CDS" id="BAB15320"/>
    </conflict>
    <text>Truncated N-terminus.</text>
</comment>
<gene>
    <name type="primary">VPS11</name>
    <name type="synonym">RNF108</name>
    <name type="ORF">PP3476</name>
</gene>
<accession>Q9H270</accession>
<accession>Q8WY89</accession>
<accession>Q96EP8</accession>
<accession>Q9H6D9</accession>
<accession>Q9HCS6</accession>
<dbReference type="EMBL" id="AF308800">
    <property type="protein sequence ID" value="AAG34677.1"/>
    <property type="molecule type" value="mRNA"/>
</dbReference>
<dbReference type="EMBL" id="AB027508">
    <property type="protein sequence ID" value="BAA95163.2"/>
    <property type="molecule type" value="mRNA"/>
</dbReference>
<dbReference type="EMBL" id="BC012051">
    <property type="protein sequence ID" value="AAH12051.2"/>
    <property type="molecule type" value="mRNA"/>
</dbReference>
<dbReference type="EMBL" id="BC065563">
    <property type="protein sequence ID" value="AAH65563.1"/>
    <property type="molecule type" value="mRNA"/>
</dbReference>
<dbReference type="EMBL" id="AF258558">
    <property type="protein sequence ID" value="AAG23761.1"/>
    <property type="status" value="ALT_FRAME"/>
    <property type="molecule type" value="mRNA"/>
</dbReference>
<dbReference type="EMBL" id="AK026012">
    <property type="protein sequence ID" value="BAB15320.1"/>
    <property type="status" value="ALT_INIT"/>
    <property type="molecule type" value="mRNA"/>
</dbReference>
<dbReference type="CCDS" id="CCDS73404.1"/>
<dbReference type="RefSeq" id="NP_001277114.1">
    <property type="nucleotide sequence ID" value="NM_001290185.1"/>
</dbReference>
<dbReference type="RefSeq" id="NP_068375.3">
    <property type="nucleotide sequence ID" value="NM_021729.5"/>
</dbReference>
<dbReference type="SMR" id="Q9H270"/>
<dbReference type="BioGRID" id="120930">
    <property type="interactions" value="94"/>
</dbReference>
<dbReference type="ComplexPortal" id="CPX-6212">
    <property type="entry name" value="HOPS tethering complex"/>
</dbReference>
<dbReference type="ComplexPortal" id="CPX-6213">
    <property type="entry name" value="CORVET tethering complex"/>
</dbReference>
<dbReference type="CORUM" id="Q9H270"/>
<dbReference type="FunCoup" id="Q9H270">
    <property type="interactions" value="2122"/>
</dbReference>
<dbReference type="IntAct" id="Q9H270">
    <property type="interactions" value="78"/>
</dbReference>
<dbReference type="MINT" id="Q9H270"/>
<dbReference type="STRING" id="9606.ENSP00000481126"/>
<dbReference type="GlyGen" id="Q9H270">
    <property type="glycosylation" value="3 sites, 1 O-linked glycan (2 sites)"/>
</dbReference>
<dbReference type="iPTMnet" id="Q9H270"/>
<dbReference type="PhosphoSitePlus" id="Q9H270"/>
<dbReference type="BioMuta" id="VPS11"/>
<dbReference type="DMDM" id="23396928"/>
<dbReference type="jPOST" id="Q9H270"/>
<dbReference type="MassIVE" id="Q9H270"/>
<dbReference type="PaxDb" id="9606-ENSP00000481126"/>
<dbReference type="ProteomicsDB" id="80509"/>
<dbReference type="Pumba" id="Q9H270"/>
<dbReference type="Antibodypedia" id="32587">
    <property type="antibodies" value="221 antibodies from 32 providers"/>
</dbReference>
<dbReference type="DNASU" id="55823"/>
<dbReference type="GeneID" id="55823"/>
<dbReference type="KEGG" id="hsa:55823"/>
<dbReference type="UCSC" id="uc058ier.1">
    <property type="organism name" value="human"/>
</dbReference>
<dbReference type="AGR" id="HGNC:14583"/>
<dbReference type="CTD" id="55823"/>
<dbReference type="DisGeNET" id="55823"/>
<dbReference type="GeneCards" id="VPS11"/>
<dbReference type="HGNC" id="HGNC:14583">
    <property type="gene designation" value="VPS11"/>
</dbReference>
<dbReference type="MalaCards" id="VPS11"/>
<dbReference type="MIM" id="608549">
    <property type="type" value="gene"/>
</dbReference>
<dbReference type="MIM" id="616683">
    <property type="type" value="phenotype"/>
</dbReference>
<dbReference type="MIM" id="619637">
    <property type="type" value="phenotype"/>
</dbReference>
<dbReference type="neXtProt" id="NX_Q9H270"/>
<dbReference type="Orphanet" id="466934">
    <property type="disease" value="VPS11-related autosomal recessive hypomyelinating leukodystrophy"/>
</dbReference>
<dbReference type="PharmGKB" id="PA37902"/>
<dbReference type="VEuPathDB" id="HostDB:ENSG00000160695"/>
<dbReference type="eggNOG" id="KOG2114">
    <property type="taxonomic scope" value="Eukaryota"/>
</dbReference>
<dbReference type="HOGENOM" id="CLU_001287_3_1_1"/>
<dbReference type="InParanoid" id="Q9H270"/>
<dbReference type="OrthoDB" id="26184at2759"/>
<dbReference type="PAN-GO" id="Q9H270">
    <property type="GO annotations" value="7 GO annotations based on evolutionary models"/>
</dbReference>
<dbReference type="PhylomeDB" id="Q9H270"/>
<dbReference type="PathwayCommons" id="Q9H270"/>
<dbReference type="Reactome" id="R-HSA-9754560">
    <property type="pathway name" value="SARS-CoV-2 modulates autophagy"/>
</dbReference>
<dbReference type="SignaLink" id="Q9H270"/>
<dbReference type="SIGNOR" id="Q9H270"/>
<dbReference type="BioGRID-ORCS" id="55823">
    <property type="hits" value="57 hits in 366 CRISPR screens"/>
</dbReference>
<dbReference type="CD-CODE" id="FB4E32DD">
    <property type="entry name" value="Presynaptic clusters and postsynaptic densities"/>
</dbReference>
<dbReference type="ChiTaRS" id="VPS11">
    <property type="organism name" value="human"/>
</dbReference>
<dbReference type="GeneWiki" id="VPS11"/>
<dbReference type="GenomeRNAi" id="55823"/>
<dbReference type="Pharos" id="Q9H270">
    <property type="development level" value="Tbio"/>
</dbReference>
<dbReference type="PRO" id="PR:Q9H270"/>
<dbReference type="Proteomes" id="UP000005640">
    <property type="component" value="Chromosome 11"/>
</dbReference>
<dbReference type="RNAct" id="Q9H270">
    <property type="molecule type" value="protein"/>
</dbReference>
<dbReference type="Bgee" id="ENSG00000160695">
    <property type="expression patterns" value="Expressed in prefrontal cortex and 98 other cell types or tissues"/>
</dbReference>
<dbReference type="ExpressionAtlas" id="Q9H270">
    <property type="expression patterns" value="baseline and differential"/>
</dbReference>
<dbReference type="GO" id="GO:0005776">
    <property type="term" value="C:autophagosome"/>
    <property type="evidence" value="ECO:0007669"/>
    <property type="project" value="UniProtKB-SubCell"/>
</dbReference>
<dbReference type="GO" id="GO:0030136">
    <property type="term" value="C:clathrin-coated vesicle"/>
    <property type="evidence" value="ECO:0007669"/>
    <property type="project" value="UniProtKB-SubCell"/>
</dbReference>
<dbReference type="GO" id="GO:0033263">
    <property type="term" value="C:CORVET complex"/>
    <property type="evidence" value="ECO:0000303"/>
    <property type="project" value="ComplexPortal"/>
</dbReference>
<dbReference type="GO" id="GO:0005769">
    <property type="term" value="C:early endosome"/>
    <property type="evidence" value="ECO:0007669"/>
    <property type="project" value="UniProtKB-SubCell"/>
</dbReference>
<dbReference type="GO" id="GO:0030139">
    <property type="term" value="C:endocytic vesicle"/>
    <property type="evidence" value="ECO:0000314"/>
    <property type="project" value="UniProtKB"/>
</dbReference>
<dbReference type="GO" id="GO:0005768">
    <property type="term" value="C:endosome"/>
    <property type="evidence" value="ECO:0000314"/>
    <property type="project" value="UniProtKB"/>
</dbReference>
<dbReference type="GO" id="GO:0010008">
    <property type="term" value="C:endosome membrane"/>
    <property type="evidence" value="ECO:0000304"/>
    <property type="project" value="Reactome"/>
</dbReference>
<dbReference type="GO" id="GO:0030897">
    <property type="term" value="C:HOPS complex"/>
    <property type="evidence" value="ECO:0000314"/>
    <property type="project" value="UniProtKB"/>
</dbReference>
<dbReference type="GO" id="GO:0005770">
    <property type="term" value="C:late endosome"/>
    <property type="evidence" value="ECO:0000314"/>
    <property type="project" value="UniProtKB"/>
</dbReference>
<dbReference type="GO" id="GO:0031902">
    <property type="term" value="C:late endosome membrane"/>
    <property type="evidence" value="ECO:0007669"/>
    <property type="project" value="UniProtKB-SubCell"/>
</dbReference>
<dbReference type="GO" id="GO:0005765">
    <property type="term" value="C:lysosomal membrane"/>
    <property type="evidence" value="ECO:0007005"/>
    <property type="project" value="UniProtKB"/>
</dbReference>
<dbReference type="GO" id="GO:0005764">
    <property type="term" value="C:lysosome"/>
    <property type="evidence" value="ECO:0000314"/>
    <property type="project" value="UniProtKB"/>
</dbReference>
<dbReference type="GO" id="GO:0000166">
    <property type="term" value="F:nucleotide binding"/>
    <property type="evidence" value="ECO:0007669"/>
    <property type="project" value="UniProtKB-KW"/>
</dbReference>
<dbReference type="GO" id="GO:0019904">
    <property type="term" value="F:protein domain specific binding"/>
    <property type="evidence" value="ECO:0000353"/>
    <property type="project" value="UniProtKB"/>
</dbReference>
<dbReference type="GO" id="GO:0030674">
    <property type="term" value="F:protein-macromolecule adaptor activity"/>
    <property type="evidence" value="ECO:0000318"/>
    <property type="project" value="GO_Central"/>
</dbReference>
<dbReference type="GO" id="GO:0019905">
    <property type="term" value="F:syntaxin binding"/>
    <property type="evidence" value="ECO:0000314"/>
    <property type="project" value="UniProtKB"/>
</dbReference>
<dbReference type="GO" id="GO:0061630">
    <property type="term" value="F:ubiquitin protein ligase activity"/>
    <property type="evidence" value="ECO:0000315"/>
    <property type="project" value="FlyBase"/>
</dbReference>
<dbReference type="GO" id="GO:0008270">
    <property type="term" value="F:zinc ion binding"/>
    <property type="evidence" value="ECO:0007669"/>
    <property type="project" value="UniProtKB-KW"/>
</dbReference>
<dbReference type="GO" id="GO:0006914">
    <property type="term" value="P:autophagy"/>
    <property type="evidence" value="ECO:0007669"/>
    <property type="project" value="UniProtKB-KW"/>
</dbReference>
<dbReference type="GO" id="GO:0034058">
    <property type="term" value="P:endosomal vesicle fusion"/>
    <property type="evidence" value="ECO:0000315"/>
    <property type="project" value="UniProtKB"/>
</dbReference>
<dbReference type="GO" id="GO:0007032">
    <property type="term" value="P:endosome organization"/>
    <property type="evidence" value="ECO:0000318"/>
    <property type="project" value="GO_Central"/>
</dbReference>
<dbReference type="GO" id="GO:0008333">
    <property type="term" value="P:endosome to lysosome transport"/>
    <property type="evidence" value="ECO:0000315"/>
    <property type="project" value="UniProtKB"/>
</dbReference>
<dbReference type="GO" id="GO:0006886">
    <property type="term" value="P:intracellular protein transport"/>
    <property type="evidence" value="ECO:0007669"/>
    <property type="project" value="InterPro"/>
</dbReference>
<dbReference type="GO" id="GO:0033147">
    <property type="term" value="P:negative regulation of intracellular estrogen receptor signaling pathway"/>
    <property type="evidence" value="ECO:0000316"/>
    <property type="project" value="FlyBase"/>
</dbReference>
<dbReference type="GO" id="GO:0048284">
    <property type="term" value="P:organelle fusion"/>
    <property type="evidence" value="ECO:0000318"/>
    <property type="project" value="GO_Central"/>
</dbReference>
<dbReference type="GO" id="GO:2000643">
    <property type="term" value="P:positive regulation of early endosome to late endosome transport"/>
    <property type="evidence" value="ECO:0000315"/>
    <property type="project" value="UniProtKB"/>
</dbReference>
<dbReference type="GO" id="GO:0045732">
    <property type="term" value="P:positive regulation of protein catabolic process"/>
    <property type="evidence" value="ECO:0000315"/>
    <property type="project" value="UniProtKB"/>
</dbReference>
<dbReference type="GO" id="GO:1903955">
    <property type="term" value="P:positive regulation of protein targeting to mitochondrion"/>
    <property type="evidence" value="ECO:0007001"/>
    <property type="project" value="ParkinsonsUK-UCL"/>
</dbReference>
<dbReference type="GO" id="GO:0016567">
    <property type="term" value="P:protein ubiquitination"/>
    <property type="evidence" value="ECO:0000315"/>
    <property type="project" value="FlyBase"/>
</dbReference>
<dbReference type="GO" id="GO:1902115">
    <property type="term" value="P:regulation of organelle assembly"/>
    <property type="evidence" value="ECO:0000315"/>
    <property type="project" value="UniProtKB"/>
</dbReference>
<dbReference type="GO" id="GO:0031647">
    <property type="term" value="P:regulation of protein stability"/>
    <property type="evidence" value="ECO:0007001"/>
    <property type="project" value="ParkinsonsUK-UCL"/>
</dbReference>
<dbReference type="GO" id="GO:0035542">
    <property type="term" value="P:regulation of SNARE complex assembly"/>
    <property type="evidence" value="ECO:0000303"/>
    <property type="project" value="ComplexPortal"/>
</dbReference>
<dbReference type="GO" id="GO:0007033">
    <property type="term" value="P:vacuole organization"/>
    <property type="evidence" value="ECO:0000318"/>
    <property type="project" value="GO_Central"/>
</dbReference>
<dbReference type="GO" id="GO:0006904">
    <property type="term" value="P:vesicle docking involved in exocytosis"/>
    <property type="evidence" value="ECO:0000318"/>
    <property type="project" value="GO_Central"/>
</dbReference>
<dbReference type="CDD" id="cd16688">
    <property type="entry name" value="RING-H2_Vps11"/>
    <property type="match status" value="1"/>
</dbReference>
<dbReference type="FunFam" id="1.25.40.10:FF:000164">
    <property type="entry name" value="Vacuolar protein sorting-associated protein 11 homolog"/>
    <property type="match status" value="1"/>
</dbReference>
<dbReference type="FunFam" id="2.130.10.10:FF:000570">
    <property type="entry name" value="Vacuolar protein sorting-associated protein 11 homolog"/>
    <property type="match status" value="1"/>
</dbReference>
<dbReference type="FunFam" id="3.30.40.10:FF:000258">
    <property type="entry name" value="Vacuolar protein sorting-associated protein 11 homolog"/>
    <property type="match status" value="1"/>
</dbReference>
<dbReference type="Gene3D" id="1.25.40.10">
    <property type="entry name" value="Tetratricopeptide repeat domain"/>
    <property type="match status" value="1"/>
</dbReference>
<dbReference type="Gene3D" id="2.130.10.10">
    <property type="entry name" value="YVTN repeat-like/Quinoprotein amine dehydrogenase"/>
    <property type="match status" value="1"/>
</dbReference>
<dbReference type="Gene3D" id="3.30.40.10">
    <property type="entry name" value="Zinc/RING finger domain, C3HC4 (zinc finger)"/>
    <property type="match status" value="1"/>
</dbReference>
<dbReference type="InterPro" id="IPR016024">
    <property type="entry name" value="ARM-type_fold"/>
</dbReference>
<dbReference type="InterPro" id="IPR000547">
    <property type="entry name" value="Clathrin_H-chain/VPS_repeat"/>
</dbReference>
<dbReference type="InterPro" id="IPR011990">
    <property type="entry name" value="TPR-like_helical_dom_sf"/>
</dbReference>
<dbReference type="InterPro" id="IPR016528">
    <property type="entry name" value="VPS11"/>
</dbReference>
<dbReference type="InterPro" id="IPR024763">
    <property type="entry name" value="VPS11_C"/>
</dbReference>
<dbReference type="InterPro" id="IPR015943">
    <property type="entry name" value="WD40/YVTN_repeat-like_dom_sf"/>
</dbReference>
<dbReference type="InterPro" id="IPR036322">
    <property type="entry name" value="WD40_repeat_dom_sf"/>
</dbReference>
<dbReference type="InterPro" id="IPR001841">
    <property type="entry name" value="Znf_RING"/>
</dbReference>
<dbReference type="InterPro" id="IPR013083">
    <property type="entry name" value="Znf_RING/FYVE/PHD"/>
</dbReference>
<dbReference type="PANTHER" id="PTHR23323">
    <property type="entry name" value="VACUOLAR PROTEIN SORTING-ASSOCIATED PROTEIN"/>
    <property type="match status" value="1"/>
</dbReference>
<dbReference type="PANTHER" id="PTHR23323:SF24">
    <property type="entry name" value="VACUOLAR PROTEIN SORTING-ASSOCIATED PROTEIN 11 HOMOLOG"/>
    <property type="match status" value="1"/>
</dbReference>
<dbReference type="Pfam" id="PF23341">
    <property type="entry name" value="PEP5_VPS11_N"/>
    <property type="match status" value="1"/>
</dbReference>
<dbReference type="Pfam" id="PF23356">
    <property type="entry name" value="TPR_PEP5_VPS11"/>
    <property type="match status" value="1"/>
</dbReference>
<dbReference type="Pfam" id="PF12451">
    <property type="entry name" value="VPS11_C"/>
    <property type="match status" value="1"/>
</dbReference>
<dbReference type="Pfam" id="PF13923">
    <property type="entry name" value="zf-C3HC4_2"/>
    <property type="match status" value="1"/>
</dbReference>
<dbReference type="PIRSF" id="PIRSF007860">
    <property type="entry name" value="VPS11"/>
    <property type="match status" value="1"/>
</dbReference>
<dbReference type="SMART" id="SM00184">
    <property type="entry name" value="RING"/>
    <property type="match status" value="1"/>
</dbReference>
<dbReference type="SUPFAM" id="SSF48371">
    <property type="entry name" value="ARM repeat"/>
    <property type="match status" value="1"/>
</dbReference>
<dbReference type="SUPFAM" id="SSF57850">
    <property type="entry name" value="RING/U-box"/>
    <property type="match status" value="1"/>
</dbReference>
<dbReference type="SUPFAM" id="SSF50978">
    <property type="entry name" value="WD40 repeat-like"/>
    <property type="match status" value="1"/>
</dbReference>
<dbReference type="PROSITE" id="PS50236">
    <property type="entry name" value="CHCR"/>
    <property type="match status" value="2"/>
</dbReference>
<dbReference type="PROSITE" id="PS50089">
    <property type="entry name" value="ZF_RING_2"/>
    <property type="match status" value="1"/>
</dbReference>
<evidence type="ECO:0000250" key="1">
    <source>
        <dbReference type="UniProtKB" id="Q91W86"/>
    </source>
</evidence>
<evidence type="ECO:0000255" key="2"/>
<evidence type="ECO:0000255" key="3">
    <source>
        <dbReference type="PROSITE-ProRule" id="PRU00175"/>
    </source>
</evidence>
<evidence type="ECO:0000269" key="4">
    <source>
    </source>
</evidence>
<evidence type="ECO:0000269" key="5">
    <source>
    </source>
</evidence>
<evidence type="ECO:0000269" key="6">
    <source>
    </source>
</evidence>
<evidence type="ECO:0000269" key="7">
    <source>
    </source>
</evidence>
<evidence type="ECO:0000269" key="8">
    <source>
    </source>
</evidence>
<evidence type="ECO:0000269" key="9">
    <source>
    </source>
</evidence>
<evidence type="ECO:0000269" key="10">
    <source>
    </source>
</evidence>
<evidence type="ECO:0000269" key="11">
    <source>
    </source>
</evidence>
<evidence type="ECO:0000269" key="12">
    <source>
    </source>
</evidence>
<evidence type="ECO:0000269" key="13">
    <source>
    </source>
</evidence>
<evidence type="ECO:0000269" key="14">
    <source>
    </source>
</evidence>
<evidence type="ECO:0000269" key="15">
    <source>
    </source>
</evidence>
<evidence type="ECO:0000269" key="16">
    <source>
    </source>
</evidence>
<evidence type="ECO:0000269" key="17">
    <source>
    </source>
</evidence>
<evidence type="ECO:0000305" key="18"/>
<evidence type="ECO:0000305" key="19">
    <source>
    </source>
</evidence>
<evidence type="ECO:0000305" key="20">
    <source>
    </source>
</evidence>
<evidence type="ECO:0000305" key="21">
    <source>
    </source>
</evidence>
<evidence type="ECO:0000305" key="22">
    <source>
    </source>
</evidence>
<evidence type="ECO:0000305" key="23">
    <source>
    </source>
</evidence>
<evidence type="ECO:0007744" key="24">
    <source>
    </source>
</evidence>
<evidence type="ECO:0007744" key="25">
    <source>
    </source>
</evidence>
<sequence>MAAYLQWRRFVFFDKELVKEPLSNDGAAPGATPASGSAASKFLCLPPGITVCDSGRGSLVFGDMEGQIWFLPRSLQLTGFQAYKLRVTHLYQLKQHNILASVGEDEEGINPLVKIWNLEKRDGGNPLCTRIFPAIPGTEPTVVSCLTVHENLNFMAIGFTDGSVTLNKGDITRDRHSKTQILHKGNYPVTGLAFRQAGKTTHLFVVTTENVQSYIVSGKDYPRVELDTHGCGLRCSALSDPSQDLQFIVAGDECVYLYQPDERGPCFAFEGHKLIAHWFRGYLIIVSRDRKVSPKSEFTSRDSQSSDKQILNIYDLCNKFIAYSTVFEDVVDVLAEWGSLYVLTRDGRVHALQEKDTQTKLEMLFKKNLFEMAINLAKSQHLDSDGLAQIFMQYGDHLYSKGNHDGAVQQYIRTIGKLEPSYVIRKFLDAQRIHNLTAYLQTLHRQSLANADHTTLLLNCYTKLKDSSKLEEFIKKKSESEVHFDVETAIKVLRQAGYYSHALYLAENHAHHEWYLKIQLEDIKNYQEALRYIGKLPFEQAESNMKRYGKILMHHIPEQTTQLLKGLCTDYRPSLEGRSDREAPGCRANSEEFIPIFANNPRELKAFLEHMSEVQPDSPQGIYDTLLELRLQNWAHEKDPQVKEKLHAEAISLLKSGRFCDVFDKALVLCQMHDFQDGVLYLYEQGKLFQQIMHYHMQHEQYRQVISVCERHGEQDPSLWEQALSYFARKEEDCKEYVAAVLKHIENKNLMPPLLVVQTLAHNSTATLSVIRDYLVQKLQKQSQQIAQDELRVRRYREETTRIRQEIQELKASPKIFQKTKCSICNSALELPSVHFLCGHSFHQHCFESYSESDADCPTCLPENRKVMDMIRAQEQKRDLHDQFQHQLRCSNDSFSVIADYFGRGVFNKLTLLTDPPTARLTSSLEAGLQRDLLMHSRRGT</sequence>
<proteinExistence type="evidence at protein level"/>
<name>VPS11_HUMAN</name>
<reference key="1">
    <citation type="journal article" date="2001" name="Gene">
        <title>Molecular cloning and characterization of human VPS18, VPS11, VPS16, and VPS33.</title>
        <authorList>
            <person name="Huizing M."/>
            <person name="Didier A."/>
            <person name="Walenta J."/>
            <person name="Anikster Y."/>
            <person name="Gahl W.A."/>
            <person name="Kraemer H."/>
        </authorList>
    </citation>
    <scope>NUCLEOTIDE SEQUENCE [MRNA]</scope>
</reference>
<reference key="2">
    <citation type="journal article" date="2001" name="J. Biol. Chem.">
        <title>Molecular characterization of mammalian homologues of class C Vps proteins that interact with syntaxin-7.</title>
        <authorList>
            <person name="Kim B.Y."/>
            <person name="Kraemer H."/>
            <person name="Yamamoto A."/>
            <person name="Kominami E."/>
            <person name="Kohsaka S."/>
            <person name="Akazawa C."/>
        </authorList>
    </citation>
    <scope>NUCLEOTIDE SEQUENCE [MRNA]</scope>
    <scope>FUNCTION</scope>
    <scope>SUBCELLULAR LOCATION</scope>
    <scope>INTERACTION WITH VPS16; VPS18; VPS33A AND STX7</scope>
    <source>
        <tissue>Brain</tissue>
    </source>
</reference>
<reference key="3">
    <citation type="journal article" date="2004" name="Genome Res.">
        <title>The status, quality, and expansion of the NIH full-length cDNA project: the Mammalian Gene Collection (MGC).</title>
        <authorList>
            <consortium name="The MGC Project Team"/>
        </authorList>
    </citation>
    <scope>NUCLEOTIDE SEQUENCE [LARGE SCALE MRNA]</scope>
    <source>
        <tissue>Eye</tissue>
        <tissue>Skin</tissue>
    </source>
</reference>
<reference key="4">
    <citation type="journal article" date="2004" name="Proc. Natl. Acad. Sci. U.S.A.">
        <title>Large-scale cDNA transfection screening for genes related to cancer development and progression.</title>
        <authorList>
            <person name="Wan D."/>
            <person name="Gong Y."/>
            <person name="Qin W."/>
            <person name="Zhang P."/>
            <person name="Li J."/>
            <person name="Wei L."/>
            <person name="Zhou X."/>
            <person name="Li H."/>
            <person name="Qiu X."/>
            <person name="Zhong F."/>
            <person name="He L."/>
            <person name="Yu J."/>
            <person name="Yao G."/>
            <person name="Jiang H."/>
            <person name="Qian L."/>
            <person name="Yu Y."/>
            <person name="Shu H."/>
            <person name="Chen X."/>
            <person name="Xu H."/>
            <person name="Guo M."/>
            <person name="Pan Z."/>
            <person name="Chen Y."/>
            <person name="Ge C."/>
            <person name="Yang S."/>
            <person name="Gu J."/>
        </authorList>
    </citation>
    <scope>NUCLEOTIDE SEQUENCE [LARGE SCALE MRNA] OF 144-941</scope>
</reference>
<reference key="5">
    <citation type="journal article" date="2004" name="Nat. Genet.">
        <title>Complete sequencing and characterization of 21,243 full-length human cDNAs.</title>
        <authorList>
            <person name="Ota T."/>
            <person name="Suzuki Y."/>
            <person name="Nishikawa T."/>
            <person name="Otsuki T."/>
            <person name="Sugiyama T."/>
            <person name="Irie R."/>
            <person name="Wakamatsu A."/>
            <person name="Hayashi K."/>
            <person name="Sato H."/>
            <person name="Nagai K."/>
            <person name="Kimura K."/>
            <person name="Makita H."/>
            <person name="Sekine M."/>
            <person name="Obayashi M."/>
            <person name="Nishi T."/>
            <person name="Shibahara T."/>
            <person name="Tanaka T."/>
            <person name="Ishii S."/>
            <person name="Yamamoto J."/>
            <person name="Saito K."/>
            <person name="Kawai Y."/>
            <person name="Isono Y."/>
            <person name="Nakamura Y."/>
            <person name="Nagahari K."/>
            <person name="Murakami K."/>
            <person name="Yasuda T."/>
            <person name="Iwayanagi T."/>
            <person name="Wagatsuma M."/>
            <person name="Shiratori A."/>
            <person name="Sudo H."/>
            <person name="Hosoiri T."/>
            <person name="Kaku Y."/>
            <person name="Kodaira H."/>
            <person name="Kondo H."/>
            <person name="Sugawara M."/>
            <person name="Takahashi M."/>
            <person name="Kanda K."/>
            <person name="Yokoi T."/>
            <person name="Furuya T."/>
            <person name="Kikkawa E."/>
            <person name="Omura Y."/>
            <person name="Abe K."/>
            <person name="Kamihara K."/>
            <person name="Katsuta N."/>
            <person name="Sato K."/>
            <person name="Tanikawa M."/>
            <person name="Yamazaki M."/>
            <person name="Ninomiya K."/>
            <person name="Ishibashi T."/>
            <person name="Yamashita H."/>
            <person name="Murakawa K."/>
            <person name="Fujimori K."/>
            <person name="Tanai H."/>
            <person name="Kimata M."/>
            <person name="Watanabe M."/>
            <person name="Hiraoka S."/>
            <person name="Chiba Y."/>
            <person name="Ishida S."/>
            <person name="Ono Y."/>
            <person name="Takiguchi S."/>
            <person name="Watanabe S."/>
            <person name="Yosida M."/>
            <person name="Hotuta T."/>
            <person name="Kusano J."/>
            <person name="Kanehori K."/>
            <person name="Takahashi-Fujii A."/>
            <person name="Hara H."/>
            <person name="Tanase T.-O."/>
            <person name="Nomura Y."/>
            <person name="Togiya S."/>
            <person name="Komai F."/>
            <person name="Hara R."/>
            <person name="Takeuchi K."/>
            <person name="Arita M."/>
            <person name="Imose N."/>
            <person name="Musashino K."/>
            <person name="Yuuki H."/>
            <person name="Oshima A."/>
            <person name="Sasaki N."/>
            <person name="Aotsuka S."/>
            <person name="Yoshikawa Y."/>
            <person name="Matsunawa H."/>
            <person name="Ichihara T."/>
            <person name="Shiohata N."/>
            <person name="Sano S."/>
            <person name="Moriya S."/>
            <person name="Momiyama H."/>
            <person name="Satoh N."/>
            <person name="Takami S."/>
            <person name="Terashima Y."/>
            <person name="Suzuki O."/>
            <person name="Nakagawa S."/>
            <person name="Senoh A."/>
            <person name="Mizoguchi H."/>
            <person name="Goto Y."/>
            <person name="Shimizu F."/>
            <person name="Wakebe H."/>
            <person name="Hishigaki H."/>
            <person name="Watanabe T."/>
            <person name="Sugiyama A."/>
            <person name="Takemoto M."/>
            <person name="Kawakami B."/>
            <person name="Yamazaki M."/>
            <person name="Watanabe K."/>
            <person name="Kumagai A."/>
            <person name="Itakura S."/>
            <person name="Fukuzumi Y."/>
            <person name="Fujimori Y."/>
            <person name="Komiyama M."/>
            <person name="Tashiro H."/>
            <person name="Tanigami A."/>
            <person name="Fujiwara T."/>
            <person name="Ono T."/>
            <person name="Yamada K."/>
            <person name="Fujii Y."/>
            <person name="Ozaki K."/>
            <person name="Hirao M."/>
            <person name="Ohmori Y."/>
            <person name="Kawabata A."/>
            <person name="Hikiji T."/>
            <person name="Kobatake N."/>
            <person name="Inagaki H."/>
            <person name="Ikema Y."/>
            <person name="Okamoto S."/>
            <person name="Okitani R."/>
            <person name="Kawakami T."/>
            <person name="Noguchi S."/>
            <person name="Itoh T."/>
            <person name="Shigeta K."/>
            <person name="Senba T."/>
            <person name="Matsumura K."/>
            <person name="Nakajima Y."/>
            <person name="Mizuno T."/>
            <person name="Morinaga M."/>
            <person name="Sasaki M."/>
            <person name="Togashi T."/>
            <person name="Oyama M."/>
            <person name="Hata H."/>
            <person name="Watanabe M."/>
            <person name="Komatsu T."/>
            <person name="Mizushima-Sugano J."/>
            <person name="Satoh T."/>
            <person name="Shirai Y."/>
            <person name="Takahashi Y."/>
            <person name="Nakagawa K."/>
            <person name="Okumura K."/>
            <person name="Nagase T."/>
            <person name="Nomura N."/>
            <person name="Kikuchi H."/>
            <person name="Masuho Y."/>
            <person name="Yamashita R."/>
            <person name="Nakai K."/>
            <person name="Yada T."/>
            <person name="Nakamura Y."/>
            <person name="Ohara O."/>
            <person name="Isogai T."/>
            <person name="Sugano S."/>
        </authorList>
    </citation>
    <scope>NUCLEOTIDE SEQUENCE [LARGE SCALE MRNA] OF 575-941</scope>
</reference>
<reference key="6">
    <citation type="journal article" date="2007" name="Traffic">
        <title>Integral and associated lysosomal membrane proteins.</title>
        <authorList>
            <person name="Schroeder B."/>
            <person name="Wrocklage C."/>
            <person name="Pan C."/>
            <person name="Jaeger R."/>
            <person name="Koesters B."/>
            <person name="Schaefer H."/>
            <person name="Elsaesser H.-P."/>
            <person name="Mann M."/>
            <person name="Hasilik A."/>
        </authorList>
    </citation>
    <scope>SUBCELLULAR LOCATION [LARGE SCALE ANALYSIS]</scope>
    <source>
        <tissue>Placenta</tissue>
    </source>
</reference>
<reference key="7">
    <citation type="journal article" date="2010" name="J. Biol. Chem.">
        <title>A protein interaction network for Ecm29 links the 26 S proteasome to molecular motors and endosomal components.</title>
        <authorList>
            <person name="Gorbea C."/>
            <person name="Pratt G."/>
            <person name="Ustrell V."/>
            <person name="Bell R."/>
            <person name="Sahasrabudhe S."/>
            <person name="Hughes R.E."/>
            <person name="Rechsteiner M."/>
        </authorList>
    </citation>
    <scope>SUBCELLULAR LOCATION</scope>
    <scope>INTERACTION WITH ECPAS</scope>
</reference>
<reference key="8">
    <citation type="journal article" date="2010" name="Cell">
        <title>Identification of the switch in early-to-late endosome transition.</title>
        <authorList>
            <person name="Poteryaev D."/>
            <person name="Datta S."/>
            <person name="Ackema K."/>
            <person name="Zerial M."/>
            <person name="Spang A."/>
        </authorList>
    </citation>
    <scope>INTERACTION WITH MON1B</scope>
</reference>
<reference key="9">
    <citation type="journal article" date="2011" name="BMC Syst. Biol.">
        <title>Initial characterization of the human central proteome.</title>
        <authorList>
            <person name="Burkard T.R."/>
            <person name="Planyavsky M."/>
            <person name="Kaupe I."/>
            <person name="Breitwieser F.P."/>
            <person name="Buerckstuemmer T."/>
            <person name="Bennett K.L."/>
            <person name="Superti-Furga G."/>
            <person name="Colinge J."/>
        </authorList>
    </citation>
    <scope>IDENTIFICATION BY MASS SPECTROMETRY [LARGE SCALE ANALYSIS]</scope>
</reference>
<reference key="10">
    <citation type="journal article" date="2011" name="Immunity">
        <title>Lysosomal trafficking, antigen presentation, and microbial killing are controlled by the Arf-like GTPase Arl8b.</title>
        <authorList>
            <person name="Garg S."/>
            <person name="Sharma M."/>
            <person name="Ung C."/>
            <person name="Tuli A."/>
            <person name="Barral D.C."/>
            <person name="Hava D.L."/>
            <person name="Veerapen N."/>
            <person name="Besra G.S."/>
            <person name="Hacohen N."/>
            <person name="Brenner M.B."/>
        </authorList>
    </citation>
    <scope>SUBCELLULAR LOCATION</scope>
</reference>
<reference key="11">
    <citation type="journal article" date="2011" name="Mol. Biol. Cell">
        <title>The ERM proteins interact with the HOPS complex to regulate the maturation of endosomes.</title>
        <authorList>
            <person name="Chirivino D."/>
            <person name="Del Maestro L."/>
            <person name="Formstecher E."/>
            <person name="Hupe P."/>
            <person name="Raposo G."/>
            <person name="Louvard D."/>
            <person name="Arpin M."/>
        </authorList>
    </citation>
    <scope>FUNCTION</scope>
    <scope>INTERACTION WITH EZR; RDX AND MSN</scope>
    <scope>SUBCELLULAR LOCATION</scope>
</reference>
<reference key="12">
    <citation type="journal article" date="2012" name="Mol. Cell. Proteomics">
        <title>Comparative large-scale characterisation of plant vs. mammal proteins reveals similar and idiosyncratic N-alpha acetylation features.</title>
        <authorList>
            <person name="Bienvenut W.V."/>
            <person name="Sumpton D."/>
            <person name="Martinez A."/>
            <person name="Lilla S."/>
            <person name="Espagne C."/>
            <person name="Meinnel T."/>
            <person name="Giglione C."/>
        </authorList>
    </citation>
    <scope>ACETYLATION [LARGE SCALE ANALYSIS] AT ALA-2</scope>
    <scope>CLEAVAGE OF INITIATOR METHIONINE [LARGE SCALE ANALYSIS]</scope>
    <scope>IDENTIFICATION BY MASS SPECTROMETRY [LARGE SCALE ANALYSIS]</scope>
</reference>
<reference key="13">
    <citation type="journal article" date="2013" name="FEBS J.">
        <title>Tethering complexes in the endocytic pathway: CORVET and HOPS.</title>
        <authorList>
            <person name="Solinger J.A."/>
            <person name="Spang A."/>
        </authorList>
    </citation>
    <scope>REVIEW ON THE HOPS AND CORVET COMPLEXES</scope>
</reference>
<reference key="14">
    <citation type="journal article" date="2013" name="J. Proteome Res.">
        <title>Toward a comprehensive characterization of a human cancer cell phosphoproteome.</title>
        <authorList>
            <person name="Zhou H."/>
            <person name="Di Palma S."/>
            <person name="Preisinger C."/>
            <person name="Peng M."/>
            <person name="Polat A.N."/>
            <person name="Heck A.J."/>
            <person name="Mohammed S."/>
        </authorList>
    </citation>
    <scope>PHOSPHORYLATION [LARGE SCALE ANALYSIS] AT SER-813 AND SER-924</scope>
    <scope>IDENTIFICATION BY MASS SPECTROMETRY [LARGE SCALE ANALYSIS]</scope>
    <source>
        <tissue>Cervix carcinoma</tissue>
        <tissue>Erythroleukemia</tissue>
    </source>
</reference>
<reference key="15">
    <citation type="journal article" date="2013" name="Proc. Natl. Acad. Sci. U.S.A.">
        <title>Structural basis of Vps33A recruitment to the human HOPS complex by Vps16.</title>
        <authorList>
            <person name="Graham S.C."/>
            <person name="Wartosch L."/>
            <person name="Gray S.R."/>
            <person name="Scourfield E.J."/>
            <person name="Deane J.E."/>
            <person name="Luzio J.P."/>
            <person name="Owen D.J."/>
        </authorList>
    </citation>
    <scope>INTERACTION WITH VPS16; VPS18 AND VPS39</scope>
</reference>
<reference key="16">
    <citation type="journal article" date="2013" name="Traffic">
        <title>The ERM proteins ezrin and moesin regulate retrograde Shiga toxin transport.</title>
        <authorList>
            <person name="Kvalvaag A.S."/>
            <person name="Pust S."/>
            <person name="Sundet K.I."/>
            <person name="Engedal N."/>
            <person name="Simm R."/>
            <person name="Sandvig K."/>
        </authorList>
    </citation>
    <scope>FUNCTION</scope>
</reference>
<reference key="17">
    <citation type="journal article" date="2014" name="Mol. Biol. Cell">
        <title>The HOPS complex mediates autophagosome-lysosome fusion through interaction with syntaxin 17.</title>
        <authorList>
            <person name="Jiang P."/>
            <person name="Nishimura T."/>
            <person name="Sakamaki Y."/>
            <person name="Itakura E."/>
            <person name="Hatta T."/>
            <person name="Natsume T."/>
            <person name="Mizushima N."/>
        </authorList>
    </citation>
    <scope>FUNCTION OF THE HOPS COMPLEX</scope>
    <scope>INTERACTION WITH STX17</scope>
</reference>
<reference key="18">
    <citation type="journal article" date="2014" name="Traffic">
        <title>Mammalian CORVET is required for fusion and conversion of distinct early endosome subpopulations.</title>
        <authorList>
            <person name="Perini E.D."/>
            <person name="Schaefer R."/>
            <person name="Stoeter M."/>
            <person name="Kalaidzidis Y."/>
            <person name="Zerial M."/>
        </authorList>
    </citation>
    <scope>FUNCTION OF THE CORVET COMPLEX</scope>
    <scope>SUBUNIT</scope>
    <scope>INTERACTION WITH TGFBRAP1</scope>
</reference>
<reference key="19">
    <citation type="journal article" date="2015" name="Traffic">
        <title>Recruitment of VPS33A to HOPS by VPS16 Is Required for Lysosome Fusion with Endosomes and Autophagosomes.</title>
        <authorList>
            <person name="Wartosch L."/>
            <person name="Guenesdogan U."/>
            <person name="Graham S.C."/>
            <person name="Luzio J.P."/>
        </authorList>
    </citation>
    <scope>FUNCTION</scope>
    <scope>FUNCTION OF THE HOPS COMPLEX</scope>
    <scope>SUBUNIT</scope>
</reference>
<reference key="20">
    <citation type="journal article" date="2017" name="J. Cell Biol.">
        <title>The Rab7 effector PLEKHM1 binds Arl8b to promote cargo traffic to lysosomes.</title>
        <authorList>
            <person name="Marwaha R."/>
            <person name="Arya S.B."/>
            <person name="Jagga D."/>
            <person name="Kaur H."/>
            <person name="Tuli A."/>
            <person name="Sharma M."/>
        </authorList>
    </citation>
    <scope>INTERACTION WITH PLEKHM1</scope>
</reference>
<reference key="21">
    <citation type="journal article" date="2015" name="J. Med. Genet.">
        <title>Hypomyelination and developmental delay associated with VPS11 mutation in Ashkenazi-Jewish patients.</title>
        <authorList>
            <person name="Edvardson S."/>
            <person name="Gerhard F."/>
            <person name="Jalas C."/>
            <person name="Lachmann J."/>
            <person name="Golan D."/>
            <person name="Saada A."/>
            <person name="Shaag A."/>
            <person name="Ungermann C."/>
            <person name="Elpeleg O."/>
        </authorList>
    </citation>
    <scope>INVOLVEMENT IN HLD12</scope>
    <scope>VARIANT HLD12 GLY-846</scope>
</reference>
<reference key="22">
    <citation type="journal article" date="2021" name="Ann. Neurol.">
        <title>A Novel Homozygous VPS11 Variant May Cause Generalized Dystonia.</title>
        <authorList>
            <person name="Monfrini E."/>
            <person name="Cogiamanian F."/>
            <person name="Salani S."/>
            <person name="Straniero L."/>
            <person name="Fagiolari G."/>
            <person name="Garbellini M."/>
            <person name="Carsana E."/>
            <person name="Borellini L."/>
            <person name="Biella F."/>
            <person name="Moggio M."/>
            <person name="Bresolin N."/>
            <person name="Corti S."/>
            <person name="Duga S."/>
            <person name="Comi G.P."/>
            <person name="Aureli M."/>
            <person name="Di Fonzo A."/>
        </authorList>
    </citation>
    <scope>VARIANT DYT32 SER-46</scope>
    <scope>INVOLVEMENT IN DYT32</scope>
</reference>
<organism>
    <name type="scientific">Homo sapiens</name>
    <name type="common">Human</name>
    <dbReference type="NCBI Taxonomy" id="9606"/>
    <lineage>
        <taxon>Eukaryota</taxon>
        <taxon>Metazoa</taxon>
        <taxon>Chordata</taxon>
        <taxon>Craniata</taxon>
        <taxon>Vertebrata</taxon>
        <taxon>Euteleostomi</taxon>
        <taxon>Mammalia</taxon>
        <taxon>Eutheria</taxon>
        <taxon>Euarchontoglires</taxon>
        <taxon>Primates</taxon>
        <taxon>Haplorrhini</taxon>
        <taxon>Catarrhini</taxon>
        <taxon>Hominidae</taxon>
        <taxon>Homo</taxon>
    </lineage>
</organism>
<feature type="initiator methionine" description="Removed" evidence="24">
    <location>
        <position position="1"/>
    </location>
</feature>
<feature type="chain" id="PRO_0000055902" description="Vacuolar protein sorting-associated protein 11 homolog">
    <location>
        <begin position="2"/>
        <end position="941"/>
    </location>
</feature>
<feature type="repeat" description="CHCR 1">
    <location>
        <begin position="411"/>
        <end position="561"/>
    </location>
</feature>
<feature type="repeat" description="CHCR 2">
    <location>
        <begin position="572"/>
        <end position="736"/>
    </location>
</feature>
<feature type="zinc finger region" description="RING-type" evidence="3">
    <location>
        <begin position="822"/>
        <end position="861"/>
    </location>
</feature>
<feature type="coiled-coil region" evidence="2">
    <location>
        <begin position="772"/>
        <end position="813"/>
    </location>
</feature>
<feature type="modified residue" description="N-acetylalanine" evidence="24">
    <location>
        <position position="2"/>
    </location>
</feature>
<feature type="modified residue" description="Phosphoserine" evidence="25">
    <location>
        <position position="813"/>
    </location>
</feature>
<feature type="modified residue" description="Omega-N-methylarginine" evidence="1">
    <location>
        <position position="904"/>
    </location>
</feature>
<feature type="modified residue" description="Phosphoserine" evidence="25">
    <location>
        <position position="924"/>
    </location>
</feature>
<feature type="sequence variant" id="VAR_086501" description="In DYT32; uncertain significance." evidence="17">
    <original>P</original>
    <variation>S</variation>
    <location>
        <position position="46"/>
    </location>
</feature>
<feature type="sequence variant" id="VAR_059813" description="In dbSNP:rs11558589.">
    <original>V</original>
    <variation>I</variation>
    <location>
        <position position="770"/>
    </location>
</feature>
<feature type="sequence variant" id="VAR_076393" description="In HLD12." evidence="15">
    <original>C</original>
    <variation>G</variation>
    <location>
        <position position="846"/>
    </location>
</feature>
<feature type="sequence conflict" description="In Ref. 2; BAA95163." evidence="18" ref="2">
    <original>AH</original>
    <variation>VI</variation>
    <location>
        <begin position="635"/>
        <end position="636"/>
    </location>
</feature>
<feature type="sequence conflict" description="In Ref. 5; BAB15320." evidence="18" ref="5">
    <original>I</original>
    <variation>T</variation>
    <location>
        <position position="871"/>
    </location>
</feature>
<feature type="sequence conflict" description="In Ref. 2; BAA95163 and 4; AAG23761." evidence="18" ref="2 4">
    <original>R</original>
    <variation>K</variation>
    <location>
        <position position="889"/>
    </location>
</feature>
<protein>
    <recommendedName>
        <fullName>Vacuolar protein sorting-associated protein 11 homolog</fullName>
        <shortName>hVPS11</shortName>
    </recommendedName>
    <alternativeName>
        <fullName>RING finger protein 108</fullName>
    </alternativeName>
</protein>